<reference key="1">
    <citation type="journal article" date="1999" name="EMBO J.">
        <title>A factor related to pseudouridine synthases is required for chloroplast group II intron trans-splicing in Chlamydomonas reinhardtii.</title>
        <authorList>
            <person name="Perron K."/>
            <person name="Goldschmidt-Clermont M."/>
            <person name="Rochaix J.-D."/>
        </authorList>
    </citation>
    <scope>NUCLEOTIDE SEQUENCE [MRNA]</scope>
    <scope>MUTAGENESIS</scope>
    <source>
        <strain>137c / CC-125</strain>
    </source>
</reference>
<dbReference type="EMBL" id="AJ243394">
    <property type="protein sequence ID" value="CAB62387.1"/>
    <property type="molecule type" value="mRNA"/>
</dbReference>
<dbReference type="RefSeq" id="XP_001701439.1">
    <property type="nucleotide sequence ID" value="XM_001701387.1"/>
</dbReference>
<dbReference type="SMR" id="Q9SMH4"/>
<dbReference type="PaxDb" id="3055-EDO97436"/>
<dbReference type="eggNOG" id="KOG2529">
    <property type="taxonomic scope" value="Eukaryota"/>
</dbReference>
<dbReference type="HOGENOM" id="CLU_671516_0_0_1"/>
<dbReference type="GO" id="GO:0009507">
    <property type="term" value="C:chloroplast"/>
    <property type="evidence" value="ECO:0007669"/>
    <property type="project" value="UniProtKB-SubCell"/>
</dbReference>
<dbReference type="GO" id="GO:0009982">
    <property type="term" value="F:pseudouridine synthase activity"/>
    <property type="evidence" value="ECO:0007669"/>
    <property type="project" value="InterPro"/>
</dbReference>
<dbReference type="GO" id="GO:0003723">
    <property type="term" value="F:RNA binding"/>
    <property type="evidence" value="ECO:0007669"/>
    <property type="project" value="InterPro"/>
</dbReference>
<dbReference type="GO" id="GO:0006397">
    <property type="term" value="P:mRNA processing"/>
    <property type="evidence" value="ECO:0007669"/>
    <property type="project" value="UniProtKB-KW"/>
</dbReference>
<dbReference type="GO" id="GO:0001522">
    <property type="term" value="P:pseudouridine synthesis"/>
    <property type="evidence" value="ECO:0007669"/>
    <property type="project" value="InterPro"/>
</dbReference>
<dbReference type="GO" id="GO:0008380">
    <property type="term" value="P:RNA splicing"/>
    <property type="evidence" value="ECO:0007669"/>
    <property type="project" value="UniProtKB-KW"/>
</dbReference>
<dbReference type="Gene3D" id="3.30.2350.10">
    <property type="entry name" value="Pseudouridine synthase"/>
    <property type="match status" value="2"/>
</dbReference>
<dbReference type="InterPro" id="IPR020103">
    <property type="entry name" value="PsdUridine_synth_cat_dom_sf"/>
</dbReference>
<dbReference type="InterPro" id="IPR002501">
    <property type="entry name" value="PsdUridine_synth_N"/>
</dbReference>
<dbReference type="InterPro" id="IPR004802">
    <property type="entry name" value="tRNA_PsdUridine_synth_B_fam"/>
</dbReference>
<dbReference type="PANTHER" id="PTHR23127">
    <property type="entry name" value="CENTROMERE/MICROTUBULE BINDING PROTEIN CBF5"/>
    <property type="match status" value="1"/>
</dbReference>
<dbReference type="PANTHER" id="PTHR23127:SF0">
    <property type="entry name" value="H_ACA RIBONUCLEOPROTEIN COMPLEX SUBUNIT DKC1"/>
    <property type="match status" value="1"/>
</dbReference>
<dbReference type="Pfam" id="PF01509">
    <property type="entry name" value="TruB_N"/>
    <property type="match status" value="1"/>
</dbReference>
<dbReference type="SUPFAM" id="SSF55120">
    <property type="entry name" value="Pseudouridine synthase"/>
    <property type="match status" value="1"/>
</dbReference>
<name>RAA2_CHLRE</name>
<organism>
    <name type="scientific">Chlamydomonas reinhardtii</name>
    <name type="common">Chlamydomonas smithii</name>
    <dbReference type="NCBI Taxonomy" id="3055"/>
    <lineage>
        <taxon>Eukaryota</taxon>
        <taxon>Viridiplantae</taxon>
        <taxon>Chlorophyta</taxon>
        <taxon>core chlorophytes</taxon>
        <taxon>Chlorophyceae</taxon>
        <taxon>CS clade</taxon>
        <taxon>Chlamydomonadales</taxon>
        <taxon>Chlamydomonadaceae</taxon>
        <taxon>Chlamydomonas</taxon>
    </lineage>
</organism>
<accession>Q9SMH4</accession>
<keyword id="KW-0150">Chloroplast</keyword>
<keyword id="KW-0507">mRNA processing</keyword>
<keyword id="KW-0508">mRNA splicing</keyword>
<keyword id="KW-0934">Plastid</keyword>
<keyword id="KW-0809">Transit peptide</keyword>
<sequence>MRTRAGAFFGKQRSTSPSGSSTSASRQWLRSSPGRTQRPAAHRVLAVCVRNPARPAADHPLVSTTQAAAQRQARQWDSRSKPPQLQPQLRHTHVSRQAQRRQQQQVQQQAEAGALVVPTVITSFPEHLRPEVLANGVLLVDKPPHWEVPEVVAAVQRATGADKVASVAPLDARASGLMLLCFGSATRLAPRVERAAKRYTGTLVLGGSSLSGDVRGGSFRAAQLPAEHLTDEDLREAAQGLVTAAAGAPVHGAVATGHQGGGGLALRVLPRTWRLRQLPSSTEYYEERVEPSMRTLDMELLDFRVWRESALSHNDGAAGAEYDQHDQHKQELGRGLVWTRSPPHPRPVVLRFSALLVGRSHVRSLIAMYGRRLRTAACLDDLRRTEIGSFNVEEAWPLEALVPVLQRHAH</sequence>
<comment type="function">
    <text>Required for trans-splicing of exons 2 and 3 of the chloroplast encoded psaA mRNA (a group II intron). It is not known if this protein has pseudouridine activity; mutation of the potential active site residue does not cause loss of trans-splicing.</text>
</comment>
<comment type="subunit">
    <text>Possibly associated with other factors required for trans-splicing.</text>
</comment>
<comment type="subcellular location">
    <subcellularLocation>
        <location>Plastid</location>
        <location>Chloroplast</location>
    </subcellularLocation>
    <text>Associated with low density membranes.</text>
</comment>
<comment type="similarity">
    <text evidence="4">Belongs to the pseudouridine synthase TruB family.</text>
</comment>
<feature type="transit peptide" description="Chloroplast" evidence="1">
    <location>
        <begin position="1"/>
        <end position="46"/>
    </location>
</feature>
<feature type="chain" id="PRO_0000029846" description="Trans-splicing factor Raa2, chloroplastic">
    <location>
        <begin position="47"/>
        <end position="410"/>
    </location>
</feature>
<feature type="region of interest" description="Disordered" evidence="2">
    <location>
        <begin position="1"/>
        <end position="40"/>
    </location>
</feature>
<feature type="region of interest" description="Disordered" evidence="2">
    <location>
        <begin position="56"/>
        <end position="106"/>
    </location>
</feature>
<feature type="compositionally biased region" description="Low complexity" evidence="2">
    <location>
        <begin position="14"/>
        <end position="25"/>
    </location>
</feature>
<feature type="compositionally biased region" description="Polar residues" evidence="2">
    <location>
        <begin position="26"/>
        <end position="35"/>
    </location>
</feature>
<feature type="compositionally biased region" description="Low complexity" evidence="2">
    <location>
        <begin position="96"/>
        <end position="106"/>
    </location>
</feature>
<feature type="mutagenesis site" description="No loss of function." evidence="3">
    <original>D</original>
    <variation>E</variation>
    <variation>S</variation>
    <location>
        <position position="141"/>
    </location>
</feature>
<feature type="mutagenesis site" description="No loss of function." evidence="3">
    <original>K</original>
    <variation>I</variation>
    <variation>R</variation>
    <location>
        <position position="142"/>
    </location>
</feature>
<feature type="mutagenesis site" description="No loss of function." evidence="3">
    <original>D</original>
    <variation>G</variation>
    <variation>S</variation>
    <location>
        <position position="171"/>
    </location>
</feature>
<feature type="mutagenesis site" description="No loss of function." evidence="3">
    <location>
        <position position="171"/>
    </location>
</feature>
<evidence type="ECO:0000255" key="1"/>
<evidence type="ECO:0000256" key="2">
    <source>
        <dbReference type="SAM" id="MobiDB-lite"/>
    </source>
</evidence>
<evidence type="ECO:0000269" key="3">
    <source>
    </source>
</evidence>
<evidence type="ECO:0000305" key="4"/>
<protein>
    <recommendedName>
        <fullName>Trans-splicing factor Raa2, chloroplastic</fullName>
    </recommendedName>
</protein>
<proteinExistence type="evidence at protein level"/>
<gene>
    <name type="primary">RAA2</name>
    <name type="synonym">MAA2</name>
</gene>